<evidence type="ECO:0000250" key="1"/>
<evidence type="ECO:0000255" key="2">
    <source>
        <dbReference type="PROSITE-ProRule" id="PRU01047"/>
    </source>
</evidence>
<evidence type="ECO:0000255" key="3">
    <source>
        <dbReference type="PROSITE-ProRule" id="PRU01231"/>
    </source>
</evidence>
<keyword id="KW-0342">GTP-binding</keyword>
<keyword id="KW-0547">Nucleotide-binding</keyword>
<keyword id="KW-0539">Nucleus</keyword>
<keyword id="KW-1185">Reference proteome</keyword>
<keyword id="KW-0690">Ribosome biogenesis</keyword>
<feature type="chain" id="PRO_0000312629" description="GTP-binding protein 10">
    <location>
        <begin position="1"/>
        <end position="387"/>
    </location>
</feature>
<feature type="domain" description="Obg" evidence="3">
    <location>
        <begin position="13"/>
        <end position="148"/>
    </location>
</feature>
<feature type="domain" description="OBG-type G" evidence="2">
    <location>
        <begin position="149"/>
        <end position="344"/>
    </location>
</feature>
<feature type="binding site" evidence="2">
    <location>
        <begin position="155"/>
        <end position="162"/>
    </location>
    <ligand>
        <name>GTP</name>
        <dbReference type="ChEBI" id="CHEBI:37565"/>
    </ligand>
</feature>
<feature type="binding site" evidence="2">
    <location>
        <begin position="202"/>
        <end position="206"/>
    </location>
    <ligand>
        <name>GTP</name>
        <dbReference type="ChEBI" id="CHEBI:37565"/>
    </ligand>
</feature>
<feature type="binding site" evidence="2">
    <location>
        <begin position="278"/>
        <end position="281"/>
    </location>
    <ligand>
        <name>GTP</name>
        <dbReference type="ChEBI" id="CHEBI:37565"/>
    </ligand>
</feature>
<protein>
    <recommendedName>
        <fullName>GTP-binding protein 10</fullName>
    </recommendedName>
</protein>
<accession>Q3MHG6</accession>
<reference key="1">
    <citation type="submission" date="2005-09" db="EMBL/GenBank/DDBJ databases">
        <authorList>
            <consortium name="NIH - Mammalian Gene Collection (MGC) project"/>
        </authorList>
    </citation>
    <scope>NUCLEOTIDE SEQUENCE [LARGE SCALE MRNA]</scope>
    <source>
        <strain>Hereford</strain>
        <tissue>Hypothalamus</tissue>
    </source>
</reference>
<dbReference type="EMBL" id="BC105245">
    <property type="protein sequence ID" value="AAI05246.1"/>
    <property type="molecule type" value="mRNA"/>
</dbReference>
<dbReference type="RefSeq" id="NP_001073783.1">
    <property type="nucleotide sequence ID" value="NM_001080314.2"/>
</dbReference>
<dbReference type="SMR" id="Q3MHG6"/>
<dbReference type="FunCoup" id="Q3MHG6">
    <property type="interactions" value="1627"/>
</dbReference>
<dbReference type="STRING" id="9913.ENSBTAP00000043009"/>
<dbReference type="PaxDb" id="9913-ENSBTAP00000043009"/>
<dbReference type="GeneID" id="613957"/>
<dbReference type="KEGG" id="bta:613957"/>
<dbReference type="CTD" id="85865"/>
<dbReference type="eggNOG" id="KOG1489">
    <property type="taxonomic scope" value="Eukaryota"/>
</dbReference>
<dbReference type="HOGENOM" id="CLU_011747_2_3_1"/>
<dbReference type="InParanoid" id="Q3MHG6"/>
<dbReference type="OrthoDB" id="347018at2759"/>
<dbReference type="TreeFam" id="TF314774"/>
<dbReference type="Proteomes" id="UP000009136">
    <property type="component" value="Unplaced"/>
</dbReference>
<dbReference type="GO" id="GO:0005739">
    <property type="term" value="C:mitochondrion"/>
    <property type="evidence" value="ECO:0000318"/>
    <property type="project" value="GO_Central"/>
</dbReference>
<dbReference type="GO" id="GO:0005730">
    <property type="term" value="C:nucleolus"/>
    <property type="evidence" value="ECO:0007669"/>
    <property type="project" value="UniProtKB-SubCell"/>
</dbReference>
<dbReference type="GO" id="GO:0005525">
    <property type="term" value="F:GTP binding"/>
    <property type="evidence" value="ECO:0000318"/>
    <property type="project" value="GO_Central"/>
</dbReference>
<dbReference type="GO" id="GO:0003924">
    <property type="term" value="F:GTPase activity"/>
    <property type="evidence" value="ECO:0000318"/>
    <property type="project" value="GO_Central"/>
</dbReference>
<dbReference type="GO" id="GO:0000287">
    <property type="term" value="F:magnesium ion binding"/>
    <property type="evidence" value="ECO:0007669"/>
    <property type="project" value="InterPro"/>
</dbReference>
<dbReference type="GO" id="GO:0042254">
    <property type="term" value="P:ribosome biogenesis"/>
    <property type="evidence" value="ECO:0007669"/>
    <property type="project" value="UniProtKB-KW"/>
</dbReference>
<dbReference type="CDD" id="cd01898">
    <property type="entry name" value="Obg"/>
    <property type="match status" value="1"/>
</dbReference>
<dbReference type="FunFam" id="3.40.50.300:FF:001339">
    <property type="entry name" value="Mitochondrial ribosome-associated GTPase 2"/>
    <property type="match status" value="1"/>
</dbReference>
<dbReference type="FunFam" id="2.70.210.12:FF:000002">
    <property type="entry name" value="Putative gtp-binding protein 10"/>
    <property type="match status" value="1"/>
</dbReference>
<dbReference type="Gene3D" id="2.70.210.12">
    <property type="entry name" value="GTP1/OBG domain"/>
    <property type="match status" value="1"/>
</dbReference>
<dbReference type="Gene3D" id="3.40.50.300">
    <property type="entry name" value="P-loop containing nucleotide triphosphate hydrolases"/>
    <property type="match status" value="1"/>
</dbReference>
<dbReference type="InterPro" id="IPR031167">
    <property type="entry name" value="G_OBG"/>
</dbReference>
<dbReference type="InterPro" id="IPR006073">
    <property type="entry name" value="GTP-bd"/>
</dbReference>
<dbReference type="InterPro" id="IPR014100">
    <property type="entry name" value="GTP-bd_Obg/CgtA"/>
</dbReference>
<dbReference type="InterPro" id="IPR006169">
    <property type="entry name" value="GTP1_OBG_dom"/>
</dbReference>
<dbReference type="InterPro" id="IPR036726">
    <property type="entry name" value="GTP1_OBG_dom_sf"/>
</dbReference>
<dbReference type="InterPro" id="IPR045086">
    <property type="entry name" value="OBG_GTPase"/>
</dbReference>
<dbReference type="InterPro" id="IPR027417">
    <property type="entry name" value="P-loop_NTPase"/>
</dbReference>
<dbReference type="PANTHER" id="PTHR11702">
    <property type="entry name" value="DEVELOPMENTALLY REGULATED GTP-BINDING PROTEIN-RELATED"/>
    <property type="match status" value="1"/>
</dbReference>
<dbReference type="PANTHER" id="PTHR11702:SF43">
    <property type="entry name" value="GTP-BINDING PROTEIN 10"/>
    <property type="match status" value="1"/>
</dbReference>
<dbReference type="Pfam" id="PF01018">
    <property type="entry name" value="GTP1_OBG"/>
    <property type="match status" value="1"/>
</dbReference>
<dbReference type="Pfam" id="PF01926">
    <property type="entry name" value="MMR_HSR1"/>
    <property type="match status" value="1"/>
</dbReference>
<dbReference type="PIRSF" id="PIRSF002401">
    <property type="entry name" value="GTP_bd_Obg/CgtA"/>
    <property type="match status" value="1"/>
</dbReference>
<dbReference type="PRINTS" id="PR00326">
    <property type="entry name" value="GTP1OBG"/>
</dbReference>
<dbReference type="SUPFAM" id="SSF82051">
    <property type="entry name" value="Obg GTP-binding protein N-terminal domain"/>
    <property type="match status" value="1"/>
</dbReference>
<dbReference type="SUPFAM" id="SSF52540">
    <property type="entry name" value="P-loop containing nucleoside triphosphate hydrolases"/>
    <property type="match status" value="1"/>
</dbReference>
<dbReference type="PROSITE" id="PS51710">
    <property type="entry name" value="G_OBG"/>
    <property type="match status" value="1"/>
</dbReference>
<dbReference type="PROSITE" id="PS51883">
    <property type="entry name" value="OBG"/>
    <property type="match status" value="1"/>
</dbReference>
<name>GTPBA_BOVIN</name>
<organism>
    <name type="scientific">Bos taurus</name>
    <name type="common">Bovine</name>
    <dbReference type="NCBI Taxonomy" id="9913"/>
    <lineage>
        <taxon>Eukaryota</taxon>
        <taxon>Metazoa</taxon>
        <taxon>Chordata</taxon>
        <taxon>Craniata</taxon>
        <taxon>Vertebrata</taxon>
        <taxon>Euteleostomi</taxon>
        <taxon>Mammalia</taxon>
        <taxon>Eutheria</taxon>
        <taxon>Laurasiatheria</taxon>
        <taxon>Artiodactyla</taxon>
        <taxon>Ruminantia</taxon>
        <taxon>Pecora</taxon>
        <taxon>Bovidae</taxon>
        <taxon>Bovinae</taxon>
        <taxon>Bos</taxon>
    </lineage>
</organism>
<comment type="function">
    <text evidence="1">May be involved in the ribosome maturation process.</text>
</comment>
<comment type="subcellular location">
    <subcellularLocation>
        <location>Nucleus</location>
        <location>Nucleolus</location>
    </subcellularLocation>
    <text evidence="1">Found in the dense fibrillar compartment region of the nucleolus.</text>
</comment>
<comment type="similarity">
    <text evidence="2">Belongs to the TRAFAC class OBG-HflX-like GTPase superfamily. OBG GTPase family.</text>
</comment>
<gene>
    <name type="primary">GTPBP10</name>
</gene>
<sequence length="387" mass="42932">MVRCSCVLFRKYGNFIDNLRLFTKGGSGGMGYPRLGGEGGKGGDVWVVAHNRMTLKQLKDKYPQKRFVAGEGANSRVSALKGSKGKDCEIPVPVGVSVTDENGKIIGELNKEKDRLLVAEGGLGGKLLTNFLPLKGQKRVIHLDLKLIADIGLVGFPNAGKSSLLSKISHAKPAIADYAFTTIKPELGKIMYSDFKQISVADLPGLIEGAHMNKGMGHKFLKHIERTKQLLFVVDISGFQLSSQTHYRTAFETIILLSKELELYKEELHTKPALLAVNKMDLPDAQGKFHVLMNQLQNPKEFFHLFEKNMIPERTVEFQHIIPISAITGEGIDELKNCIRKSLDEHTNQENDAYHKKQLLNLHISNTVSYSEPPSKTAVSSPRMDIT</sequence>
<proteinExistence type="evidence at transcript level"/>